<dbReference type="EC" id="6.3.3.3" evidence="1"/>
<dbReference type="EMBL" id="CP001196">
    <property type="protein sequence ID" value="ACI93838.1"/>
    <property type="molecule type" value="Genomic_DNA"/>
</dbReference>
<dbReference type="EMBL" id="CP002826">
    <property type="protein sequence ID" value="AEI06059.1"/>
    <property type="molecule type" value="Genomic_DNA"/>
</dbReference>
<dbReference type="RefSeq" id="WP_012563864.1">
    <property type="nucleotide sequence ID" value="NC_015684.1"/>
</dbReference>
<dbReference type="SMR" id="B6JGN8"/>
<dbReference type="STRING" id="504832.OCA5_c13430"/>
<dbReference type="KEGG" id="oca:OCAR_6727"/>
<dbReference type="KEGG" id="ocg:OCA5_c13430"/>
<dbReference type="PATRIC" id="fig|504832.7.peg.1429"/>
<dbReference type="eggNOG" id="COG0132">
    <property type="taxonomic scope" value="Bacteria"/>
</dbReference>
<dbReference type="HOGENOM" id="CLU_072551_2_0_5"/>
<dbReference type="OrthoDB" id="9802097at2"/>
<dbReference type="UniPathway" id="UPA00078">
    <property type="reaction ID" value="UER00161"/>
</dbReference>
<dbReference type="Proteomes" id="UP000007730">
    <property type="component" value="Chromosome"/>
</dbReference>
<dbReference type="GO" id="GO:0005829">
    <property type="term" value="C:cytosol"/>
    <property type="evidence" value="ECO:0007669"/>
    <property type="project" value="TreeGrafter"/>
</dbReference>
<dbReference type="GO" id="GO:0005524">
    <property type="term" value="F:ATP binding"/>
    <property type="evidence" value="ECO:0007669"/>
    <property type="project" value="UniProtKB-UniRule"/>
</dbReference>
<dbReference type="GO" id="GO:0004141">
    <property type="term" value="F:dethiobiotin synthase activity"/>
    <property type="evidence" value="ECO:0007669"/>
    <property type="project" value="UniProtKB-UniRule"/>
</dbReference>
<dbReference type="GO" id="GO:0000287">
    <property type="term" value="F:magnesium ion binding"/>
    <property type="evidence" value="ECO:0007669"/>
    <property type="project" value="UniProtKB-UniRule"/>
</dbReference>
<dbReference type="GO" id="GO:0009102">
    <property type="term" value="P:biotin biosynthetic process"/>
    <property type="evidence" value="ECO:0007669"/>
    <property type="project" value="UniProtKB-UniRule"/>
</dbReference>
<dbReference type="CDD" id="cd03109">
    <property type="entry name" value="DTBS"/>
    <property type="match status" value="1"/>
</dbReference>
<dbReference type="Gene3D" id="3.40.50.300">
    <property type="entry name" value="P-loop containing nucleotide triphosphate hydrolases"/>
    <property type="match status" value="1"/>
</dbReference>
<dbReference type="HAMAP" id="MF_00336">
    <property type="entry name" value="BioD"/>
    <property type="match status" value="1"/>
</dbReference>
<dbReference type="InterPro" id="IPR004472">
    <property type="entry name" value="DTB_synth_BioD"/>
</dbReference>
<dbReference type="InterPro" id="IPR027417">
    <property type="entry name" value="P-loop_NTPase"/>
</dbReference>
<dbReference type="NCBIfam" id="TIGR00347">
    <property type="entry name" value="bioD"/>
    <property type="match status" value="1"/>
</dbReference>
<dbReference type="PANTHER" id="PTHR43210:SF2">
    <property type="entry name" value="ATP-DEPENDENT DETHIOBIOTIN SYNTHETASE BIOD 2"/>
    <property type="match status" value="1"/>
</dbReference>
<dbReference type="PANTHER" id="PTHR43210">
    <property type="entry name" value="DETHIOBIOTIN SYNTHETASE"/>
    <property type="match status" value="1"/>
</dbReference>
<dbReference type="Pfam" id="PF13500">
    <property type="entry name" value="AAA_26"/>
    <property type="match status" value="1"/>
</dbReference>
<dbReference type="PIRSF" id="PIRSF006755">
    <property type="entry name" value="DTB_synth"/>
    <property type="match status" value="1"/>
</dbReference>
<dbReference type="SUPFAM" id="SSF52540">
    <property type="entry name" value="P-loop containing nucleoside triphosphate hydrolases"/>
    <property type="match status" value="1"/>
</dbReference>
<keyword id="KW-0067">ATP-binding</keyword>
<keyword id="KW-0093">Biotin biosynthesis</keyword>
<keyword id="KW-0963">Cytoplasm</keyword>
<keyword id="KW-0436">Ligase</keyword>
<keyword id="KW-0460">Magnesium</keyword>
<keyword id="KW-0479">Metal-binding</keyword>
<keyword id="KW-0547">Nucleotide-binding</keyword>
<keyword id="KW-1185">Reference proteome</keyword>
<comment type="function">
    <text evidence="1">Catalyzes a mechanistically unusual reaction, the ATP-dependent insertion of CO2 between the N7 and N8 nitrogen atoms of 7,8-diaminopelargonic acid (DAPA, also called 7,8-diammoniononanoate) to form a ureido ring.</text>
</comment>
<comment type="catalytic activity">
    <reaction evidence="1">
        <text>(7R,8S)-7,8-diammoniononanoate + CO2 + ATP = (4R,5S)-dethiobiotin + ADP + phosphate + 3 H(+)</text>
        <dbReference type="Rhea" id="RHEA:15805"/>
        <dbReference type="ChEBI" id="CHEBI:15378"/>
        <dbReference type="ChEBI" id="CHEBI:16526"/>
        <dbReference type="ChEBI" id="CHEBI:30616"/>
        <dbReference type="ChEBI" id="CHEBI:43474"/>
        <dbReference type="ChEBI" id="CHEBI:149469"/>
        <dbReference type="ChEBI" id="CHEBI:149473"/>
        <dbReference type="ChEBI" id="CHEBI:456216"/>
        <dbReference type="EC" id="6.3.3.3"/>
    </reaction>
</comment>
<comment type="cofactor">
    <cofactor evidence="1">
        <name>Mg(2+)</name>
        <dbReference type="ChEBI" id="CHEBI:18420"/>
    </cofactor>
</comment>
<comment type="pathway">
    <text evidence="1">Cofactor biosynthesis; biotin biosynthesis; biotin from 7,8-diaminononanoate: step 1/2.</text>
</comment>
<comment type="subunit">
    <text evidence="1">Homodimer.</text>
</comment>
<comment type="subcellular location">
    <subcellularLocation>
        <location evidence="1">Cytoplasm</location>
    </subcellularLocation>
</comment>
<comment type="similarity">
    <text evidence="1">Belongs to the dethiobiotin synthetase family.</text>
</comment>
<organism>
    <name type="scientific">Afipia carboxidovorans (strain ATCC 49405 / DSM 1227 / KCTC 32145 / OM5)</name>
    <name type="common">Oligotropha carboxidovorans</name>
    <dbReference type="NCBI Taxonomy" id="504832"/>
    <lineage>
        <taxon>Bacteria</taxon>
        <taxon>Pseudomonadati</taxon>
        <taxon>Pseudomonadota</taxon>
        <taxon>Alphaproteobacteria</taxon>
        <taxon>Hyphomicrobiales</taxon>
        <taxon>Nitrobacteraceae</taxon>
        <taxon>Afipia</taxon>
    </lineage>
</organism>
<accession>B6JGN8</accession>
<accession>F8BWJ2</accession>
<sequence length="210" mass="22668">MSTRLVVSGTDTDVGKTVFSAALAGALDADYWKPVQAGRDDGTDALRVARLSGLPPERILPERYILNTPASPHYAARIDGITIDTNDLTPPPAKDRPLVIEGAGGLMVPINEDTLFIDVFARWKLPLVLCARTTLGTINHSLLSIEAVKRRDIPLVGIAFIGEDYAESERIICKIGGVRHLGRLPPLSPLTPEALRAAFITSFNLSDFTA</sequence>
<evidence type="ECO:0000255" key="1">
    <source>
        <dbReference type="HAMAP-Rule" id="MF_00336"/>
    </source>
</evidence>
<reference key="1">
    <citation type="journal article" date="2008" name="J. Bacteriol.">
        <title>Genome sequence of the chemolithoautotrophic bacterium Oligotropha carboxidovorans OM5T.</title>
        <authorList>
            <person name="Paul D."/>
            <person name="Bridges S."/>
            <person name="Burgess S.C."/>
            <person name="Dandass Y."/>
            <person name="Lawrence M.L."/>
        </authorList>
    </citation>
    <scope>NUCLEOTIDE SEQUENCE [LARGE SCALE GENOMIC DNA]</scope>
    <source>
        <strain>ATCC 49405 / DSM 1227 / KCTC 32145 / OM5</strain>
    </source>
</reference>
<reference key="2">
    <citation type="journal article" date="2011" name="J. Bacteriol.">
        <title>Complete genome sequences of the chemolithoautotrophic Oligotropha carboxidovorans strains OM4 and OM5.</title>
        <authorList>
            <person name="Volland S."/>
            <person name="Rachinger M."/>
            <person name="Strittmatter A."/>
            <person name="Daniel R."/>
            <person name="Gottschalk G."/>
            <person name="Meyer O."/>
        </authorList>
    </citation>
    <scope>NUCLEOTIDE SEQUENCE [LARGE SCALE GENOMIC DNA]</scope>
    <source>
        <strain>ATCC 49405 / DSM 1227 / KCTC 32145 / OM5</strain>
    </source>
</reference>
<name>BIOD_AFIC5</name>
<feature type="chain" id="PRO_1000119879" description="ATP-dependent dethiobiotin synthetase BioD">
    <location>
        <begin position="1"/>
        <end position="210"/>
    </location>
</feature>
<feature type="active site" evidence="1">
    <location>
        <position position="33"/>
    </location>
</feature>
<feature type="binding site" evidence="1">
    <location>
        <begin position="13"/>
        <end position="18"/>
    </location>
    <ligand>
        <name>ATP</name>
        <dbReference type="ChEBI" id="CHEBI:30616"/>
    </ligand>
</feature>
<feature type="binding site" evidence="1">
    <location>
        <position position="17"/>
    </location>
    <ligand>
        <name>Mg(2+)</name>
        <dbReference type="ChEBI" id="CHEBI:18420"/>
    </ligand>
</feature>
<feature type="binding site" evidence="1">
    <location>
        <position position="47"/>
    </location>
    <ligand>
        <name>Mg(2+)</name>
        <dbReference type="ChEBI" id="CHEBI:18420"/>
    </ligand>
</feature>
<feature type="binding site" evidence="1">
    <location>
        <begin position="101"/>
        <end position="104"/>
    </location>
    <ligand>
        <name>ATP</name>
        <dbReference type="ChEBI" id="CHEBI:30616"/>
    </ligand>
</feature>
<feature type="binding site" evidence="1">
    <location>
        <position position="101"/>
    </location>
    <ligand>
        <name>Mg(2+)</name>
        <dbReference type="ChEBI" id="CHEBI:18420"/>
    </ligand>
</feature>
<feature type="binding site" evidence="1">
    <location>
        <begin position="185"/>
        <end position="187"/>
    </location>
    <ligand>
        <name>ATP</name>
        <dbReference type="ChEBI" id="CHEBI:30616"/>
    </ligand>
</feature>
<proteinExistence type="inferred from homology"/>
<protein>
    <recommendedName>
        <fullName evidence="1">ATP-dependent dethiobiotin synthetase BioD</fullName>
        <ecNumber evidence="1">6.3.3.3</ecNumber>
    </recommendedName>
    <alternativeName>
        <fullName evidence="1">DTB synthetase</fullName>
        <shortName evidence="1">DTBS</shortName>
    </alternativeName>
    <alternativeName>
        <fullName evidence="1">Dethiobiotin synthase</fullName>
    </alternativeName>
</protein>
<gene>
    <name evidence="1" type="primary">bioD</name>
    <name type="ordered locus">OCAR_6727</name>
    <name type="ordered locus">OCA5_c13430</name>
</gene>